<feature type="chain" id="PRO_1000118109" description="Transcription antitermination protein NusB">
    <location>
        <begin position="1"/>
        <end position="136"/>
    </location>
</feature>
<proteinExistence type="inferred from homology"/>
<keyword id="KW-0694">RNA-binding</keyword>
<keyword id="KW-0804">Transcription</keyword>
<keyword id="KW-0889">Transcription antitermination</keyword>
<keyword id="KW-0805">Transcription regulation</keyword>
<organism>
    <name type="scientific">Pseudarthrobacter chlorophenolicus (strain ATCC 700700 / DSM 12829 / CIP 107037 / JCM 12360 / KCTC 9906 / NCIMB 13794 / A6)</name>
    <name type="common">Arthrobacter chlorophenolicus</name>
    <dbReference type="NCBI Taxonomy" id="452863"/>
    <lineage>
        <taxon>Bacteria</taxon>
        <taxon>Bacillati</taxon>
        <taxon>Actinomycetota</taxon>
        <taxon>Actinomycetes</taxon>
        <taxon>Micrococcales</taxon>
        <taxon>Micrococcaceae</taxon>
        <taxon>Pseudarthrobacter</taxon>
    </lineage>
</organism>
<name>NUSB_PSECP</name>
<evidence type="ECO:0000255" key="1">
    <source>
        <dbReference type="HAMAP-Rule" id="MF_00073"/>
    </source>
</evidence>
<dbReference type="EMBL" id="CP001341">
    <property type="protein sequence ID" value="ACL39980.1"/>
    <property type="molecule type" value="Genomic_DNA"/>
</dbReference>
<dbReference type="RefSeq" id="WP_015937198.1">
    <property type="nucleotide sequence ID" value="NC_011886.1"/>
</dbReference>
<dbReference type="SMR" id="B8H8V2"/>
<dbReference type="STRING" id="452863.Achl_2006"/>
<dbReference type="KEGG" id="ach:Achl_2006"/>
<dbReference type="eggNOG" id="COG0781">
    <property type="taxonomic scope" value="Bacteria"/>
</dbReference>
<dbReference type="HOGENOM" id="CLU_087843_2_3_11"/>
<dbReference type="OrthoDB" id="3528057at2"/>
<dbReference type="Proteomes" id="UP000002505">
    <property type="component" value="Chromosome"/>
</dbReference>
<dbReference type="GO" id="GO:0005829">
    <property type="term" value="C:cytosol"/>
    <property type="evidence" value="ECO:0007669"/>
    <property type="project" value="TreeGrafter"/>
</dbReference>
<dbReference type="GO" id="GO:0003723">
    <property type="term" value="F:RNA binding"/>
    <property type="evidence" value="ECO:0007669"/>
    <property type="project" value="UniProtKB-UniRule"/>
</dbReference>
<dbReference type="GO" id="GO:0006353">
    <property type="term" value="P:DNA-templated transcription termination"/>
    <property type="evidence" value="ECO:0007669"/>
    <property type="project" value="UniProtKB-UniRule"/>
</dbReference>
<dbReference type="GO" id="GO:0031564">
    <property type="term" value="P:transcription antitermination"/>
    <property type="evidence" value="ECO:0007669"/>
    <property type="project" value="UniProtKB-KW"/>
</dbReference>
<dbReference type="Gene3D" id="1.10.940.10">
    <property type="entry name" value="NusB-like"/>
    <property type="match status" value="1"/>
</dbReference>
<dbReference type="HAMAP" id="MF_00073">
    <property type="entry name" value="NusB"/>
    <property type="match status" value="1"/>
</dbReference>
<dbReference type="InterPro" id="IPR035926">
    <property type="entry name" value="NusB-like_sf"/>
</dbReference>
<dbReference type="InterPro" id="IPR011605">
    <property type="entry name" value="NusB_fam"/>
</dbReference>
<dbReference type="InterPro" id="IPR006027">
    <property type="entry name" value="NusB_RsmB_TIM44"/>
</dbReference>
<dbReference type="NCBIfam" id="TIGR01951">
    <property type="entry name" value="nusB"/>
    <property type="match status" value="1"/>
</dbReference>
<dbReference type="PANTHER" id="PTHR11078:SF3">
    <property type="entry name" value="ANTITERMINATION NUSB DOMAIN-CONTAINING PROTEIN"/>
    <property type="match status" value="1"/>
</dbReference>
<dbReference type="PANTHER" id="PTHR11078">
    <property type="entry name" value="N UTILIZATION SUBSTANCE PROTEIN B-RELATED"/>
    <property type="match status" value="1"/>
</dbReference>
<dbReference type="Pfam" id="PF01029">
    <property type="entry name" value="NusB"/>
    <property type="match status" value="1"/>
</dbReference>
<dbReference type="SUPFAM" id="SSF48013">
    <property type="entry name" value="NusB-like"/>
    <property type="match status" value="1"/>
</dbReference>
<comment type="function">
    <text evidence="1">Involved in transcription antitermination. Required for transcription of ribosomal RNA (rRNA) genes. Binds specifically to the boxA antiterminator sequence of the ribosomal RNA (rrn) operons.</text>
</comment>
<comment type="similarity">
    <text evidence="1">Belongs to the NusB family.</text>
</comment>
<sequence>MSARGKARSRALDVLFEAEQRSASAFDVLRARREKTDQIVNPYTLEIVEGVVSRQQAIDEFLETYSQGWSLERMPSVDRIILRIGTWELLYNDDVPDGVAVSEAVALAKTLSTDESPQFINGLLGRLQQLKPSLLA</sequence>
<gene>
    <name evidence="1" type="primary">nusB</name>
    <name type="ordered locus">Achl_2006</name>
</gene>
<accession>B8H8V2</accession>
<reference key="1">
    <citation type="submission" date="2009-01" db="EMBL/GenBank/DDBJ databases">
        <title>Complete sequence of chromosome of Arthrobacter chlorophenolicus A6.</title>
        <authorList>
            <consortium name="US DOE Joint Genome Institute"/>
            <person name="Lucas S."/>
            <person name="Copeland A."/>
            <person name="Lapidus A."/>
            <person name="Glavina del Rio T."/>
            <person name="Tice H."/>
            <person name="Bruce D."/>
            <person name="Goodwin L."/>
            <person name="Pitluck S."/>
            <person name="Goltsman E."/>
            <person name="Clum A."/>
            <person name="Larimer F."/>
            <person name="Land M."/>
            <person name="Hauser L."/>
            <person name="Kyrpides N."/>
            <person name="Mikhailova N."/>
            <person name="Jansson J."/>
            <person name="Richardson P."/>
        </authorList>
    </citation>
    <scope>NUCLEOTIDE SEQUENCE [LARGE SCALE GENOMIC DNA]</scope>
    <source>
        <strain>ATCC 700700 / DSM 12829 / CIP 107037 / JCM 12360 / KCTC 9906 / NCIMB 13794 / A6</strain>
    </source>
</reference>
<protein>
    <recommendedName>
        <fullName evidence="1">Transcription antitermination protein NusB</fullName>
    </recommendedName>
    <alternativeName>
        <fullName evidence="1">Antitermination factor NusB</fullName>
    </alternativeName>
</protein>